<dbReference type="EMBL" id="AY700119">
    <property type="protein sequence ID" value="AAW31054.1"/>
    <property type="molecule type" value="Genomic_DNA"/>
</dbReference>
<dbReference type="SMR" id="Q49M28"/>
<dbReference type="FunCoup" id="Q49M28">
    <property type="interactions" value="608"/>
</dbReference>
<dbReference type="STRING" id="118797.Q49M28"/>
<dbReference type="GlyCosmos" id="Q49M28">
    <property type="glycosylation" value="1 site, No reported glycans"/>
</dbReference>
<dbReference type="InParanoid" id="Q49M28"/>
<dbReference type="Proteomes" id="UP000265300">
    <property type="component" value="Unplaced"/>
</dbReference>
<dbReference type="GO" id="GO:0030424">
    <property type="term" value="C:axon"/>
    <property type="evidence" value="ECO:0007669"/>
    <property type="project" value="TreeGrafter"/>
</dbReference>
<dbReference type="GO" id="GO:0030425">
    <property type="term" value="C:dendrite"/>
    <property type="evidence" value="ECO:0007669"/>
    <property type="project" value="TreeGrafter"/>
</dbReference>
<dbReference type="GO" id="GO:0005615">
    <property type="term" value="C:extracellular space"/>
    <property type="evidence" value="ECO:0007669"/>
    <property type="project" value="TreeGrafter"/>
</dbReference>
<dbReference type="GO" id="GO:0008021">
    <property type="term" value="C:synaptic vesicle"/>
    <property type="evidence" value="ECO:0007669"/>
    <property type="project" value="TreeGrafter"/>
</dbReference>
<dbReference type="GO" id="GO:0008083">
    <property type="term" value="F:growth factor activity"/>
    <property type="evidence" value="ECO:0007669"/>
    <property type="project" value="UniProtKB-KW"/>
</dbReference>
<dbReference type="GO" id="GO:0005163">
    <property type="term" value="F:nerve growth factor receptor binding"/>
    <property type="evidence" value="ECO:0007669"/>
    <property type="project" value="TreeGrafter"/>
</dbReference>
<dbReference type="GO" id="GO:0007169">
    <property type="term" value="P:cell surface receptor protein tyrosine kinase signaling pathway"/>
    <property type="evidence" value="ECO:0007669"/>
    <property type="project" value="TreeGrafter"/>
</dbReference>
<dbReference type="GO" id="GO:0050804">
    <property type="term" value="P:modulation of chemical synaptic transmission"/>
    <property type="evidence" value="ECO:0007669"/>
    <property type="project" value="TreeGrafter"/>
</dbReference>
<dbReference type="GO" id="GO:0043524">
    <property type="term" value="P:negative regulation of neuron apoptotic process"/>
    <property type="evidence" value="ECO:0007669"/>
    <property type="project" value="TreeGrafter"/>
</dbReference>
<dbReference type="GO" id="GO:0021675">
    <property type="term" value="P:nerve development"/>
    <property type="evidence" value="ECO:0007669"/>
    <property type="project" value="TreeGrafter"/>
</dbReference>
<dbReference type="GO" id="GO:0038180">
    <property type="term" value="P:nerve growth factor signaling pathway"/>
    <property type="evidence" value="ECO:0007669"/>
    <property type="project" value="TreeGrafter"/>
</dbReference>
<dbReference type="GO" id="GO:0048812">
    <property type="term" value="P:neuron projection morphogenesis"/>
    <property type="evidence" value="ECO:0007669"/>
    <property type="project" value="TreeGrafter"/>
</dbReference>
<dbReference type="FunFam" id="2.10.90.10:FF:000002">
    <property type="entry name" value="Brain-derived neurotrophic factor"/>
    <property type="match status" value="1"/>
</dbReference>
<dbReference type="Gene3D" id="2.10.90.10">
    <property type="entry name" value="Cystine-knot cytokines"/>
    <property type="match status" value="1"/>
</dbReference>
<dbReference type="InterPro" id="IPR020430">
    <property type="entry name" value="Brain-der_neurotrophic_factor"/>
</dbReference>
<dbReference type="InterPro" id="IPR029034">
    <property type="entry name" value="Cystine-knot_cytokine"/>
</dbReference>
<dbReference type="InterPro" id="IPR020408">
    <property type="entry name" value="Nerve_growth_factor-like"/>
</dbReference>
<dbReference type="InterPro" id="IPR002072">
    <property type="entry name" value="Nerve_growth_factor-rel"/>
</dbReference>
<dbReference type="InterPro" id="IPR019846">
    <property type="entry name" value="Nerve_growth_factor_CS"/>
</dbReference>
<dbReference type="PANTHER" id="PTHR11589:SF3">
    <property type="entry name" value="BRAIN-DERIVED NEUROTROPHIC FACTOR"/>
    <property type="match status" value="1"/>
</dbReference>
<dbReference type="PANTHER" id="PTHR11589">
    <property type="entry name" value="NERVE GROWTH FACTOR NGF -RELATED"/>
    <property type="match status" value="1"/>
</dbReference>
<dbReference type="Pfam" id="PF00243">
    <property type="entry name" value="NGF"/>
    <property type="match status" value="1"/>
</dbReference>
<dbReference type="PIRSF" id="PIRSF001789">
    <property type="entry name" value="NGF"/>
    <property type="match status" value="1"/>
</dbReference>
<dbReference type="PRINTS" id="PR01912">
    <property type="entry name" value="BDNFACTOR"/>
</dbReference>
<dbReference type="PRINTS" id="PR00268">
    <property type="entry name" value="NGF"/>
</dbReference>
<dbReference type="SMART" id="SM00140">
    <property type="entry name" value="NGF"/>
    <property type="match status" value="1"/>
</dbReference>
<dbReference type="SUPFAM" id="SSF57501">
    <property type="entry name" value="Cystine-knot cytokines"/>
    <property type="match status" value="1"/>
</dbReference>
<dbReference type="PROSITE" id="PS00248">
    <property type="entry name" value="NGF_1"/>
    <property type="match status" value="1"/>
</dbReference>
<dbReference type="PROSITE" id="PS50270">
    <property type="entry name" value="NGF_2"/>
    <property type="match status" value="1"/>
</dbReference>
<proteinExistence type="inferred from homology"/>
<feature type="signal peptide" evidence="3">
    <location>
        <begin position="1"/>
        <end position="18"/>
    </location>
</feature>
<feature type="chain" id="PRO_0000447534" description="Neurotrophic factor BDNF precursor form">
    <location>
        <begin position="19"/>
        <end position="248"/>
    </location>
</feature>
<feature type="propeptide" id="PRO_0000271440" evidence="1">
    <location>
        <begin position="19"/>
        <end position="129"/>
    </location>
</feature>
<feature type="chain" id="PRO_0000271441" description="Neurotrophic factor BDNF">
    <location>
        <begin position="130"/>
        <end position="248"/>
    </location>
</feature>
<feature type="site" description="Cleavage; by MBTPS1" evidence="2">
    <location>
        <begin position="57"/>
        <end position="58"/>
    </location>
</feature>
<feature type="glycosylation site" description="N-linked (GlcNAc...) asparagine" evidence="3">
    <location>
        <position position="122"/>
    </location>
</feature>
<feature type="disulfide bond" evidence="2">
    <location>
        <begin position="142"/>
        <end position="209"/>
    </location>
</feature>
<feature type="disulfide bond" evidence="2">
    <location>
        <begin position="187"/>
        <end position="238"/>
    </location>
</feature>
<feature type="disulfide bond" evidence="2">
    <location>
        <begin position="197"/>
        <end position="240"/>
    </location>
</feature>
<keyword id="KW-0165">Cleavage on pair of basic residues</keyword>
<keyword id="KW-1015">Disulfide bond</keyword>
<keyword id="KW-0325">Glycoprotein</keyword>
<keyword id="KW-0339">Growth factor</keyword>
<keyword id="KW-1185">Reference proteome</keyword>
<keyword id="KW-0964">Secreted</keyword>
<keyword id="KW-0732">Signal</keyword>
<reference key="1">
    <citation type="submission" date="2004-07" db="EMBL/GenBank/DDBJ databases">
        <authorList>
            <person name="Zou Z."/>
            <person name="Yang G."/>
        </authorList>
    </citation>
    <scope>NUCLEOTIDE SEQUENCE [GENOMIC DNA]</scope>
    <source>
        <strain>Isolate LV-9601</strain>
    </source>
</reference>
<accession>Q49M28</accession>
<sequence>MTILFLTMVISYFSCMKAAPMKEANVRGQGSLAYPGMRTHGTLESVNGPKVGSRGLTSSLADTVEHVIEELLDEDQKVRPSEENNKDADMYTSRVMLSSQVPLEPPLLFLLEEYKNYLDAANMSMRVRRHSDPARRGELSVCDSISEWVTAADKKTAVDMSGGTVTVLEKVPVSKGQLKQYFYETKCNPMGYTKEGCRGIDKRHWDSQCRTTQSYVRALTMDSKKRIGWRFIRIDTSCVCTLTIKRGR</sequence>
<evidence type="ECO:0000250" key="1">
    <source>
        <dbReference type="UniProtKB" id="P21237"/>
    </source>
</evidence>
<evidence type="ECO:0000250" key="2">
    <source>
        <dbReference type="UniProtKB" id="P23560"/>
    </source>
</evidence>
<evidence type="ECO:0000255" key="3"/>
<evidence type="ECO:0000305" key="4"/>
<comment type="function">
    <text evidence="1 2">Important signaling molecule that activates signaling cascades downstream of NTRK2 (By similarity). During development, promotes the survival and differentiation of selected neuronal populations of the peripheral and central nervous systems. Participates in axonal growth, pathfinding and in the modulation of dendritic growth and morphology. Major regulator of synaptic transmission and plasticity at adult synapses in many regions of the CNS. The versatility of BDNF is emphasized by its contribution to a range of adaptive neuronal responses including long-term potentiation (LTP), long-term depression (LTD), certain forms of short-term synaptic plasticity, as well as homeostatic regulation of intrinsic neuronal excitability (By similarity).</text>
</comment>
<comment type="function">
    <molecule>Neurotrophic factor BDNF precursor form</molecule>
    <text evidence="1">Important signaling molecule that activates signaling cascades downstream of NTRK2. Activates signaling cascades via the heterodimeric receptor formed by NGFR and SORCS2. Signaling via NGFR and SORCS2 plays a role in synaptic plasticity and long-term depression (LTD). Binding to NGFR and SORCS2 promotes neuronal apoptosis. Promotes neuronal growth cone collapse.</text>
</comment>
<comment type="subunit">
    <text evidence="1 2">Monomers and homodimers (By similarity). Binds to NTRK2/TRKB. Can form heterodimers with other neurotrophin family members, such as NTF3 and NTF4 (in vitro), but the physiological relevance of this is not clear (By similarity). BDNF precursor form: interacts with the heterodimer formed by NGFR and SORCS2. Mature BDNF has much lower affinity for the heterodimer formed by NGFR and SORCS2 (By similarity).</text>
</comment>
<comment type="subcellular location">
    <subcellularLocation>
        <location evidence="2">Secreted</location>
    </subcellularLocation>
</comment>
<comment type="subcellular location">
    <molecule>Neurotrophic factor BDNF precursor form</molecule>
    <subcellularLocation>
        <location evidence="2">Secreted</location>
    </subcellularLocation>
    <text evidence="2">A proportion of BDNF is secreted as immature precursor (proBDNF).</text>
</comment>
<comment type="PTM">
    <molecule>Neurotrophic factor BDNF precursor form</molecule>
    <text evidence="2">N-glycosylated and glycosulfated, contrary to mature BDNF.</text>
</comment>
<comment type="PTM">
    <text evidence="2">Mature BDNF is produced by proteolytic removal of the propeptide, catalyzed by a FURIN family member. In addition, the precursor form is proteolytically cleaved within the propeptide, but this is not an obligatory intermediate for the production of mature BDNF. Can be converted into mature BDNF by plasmin (PLG).</text>
</comment>
<comment type="similarity">
    <text evidence="4">Belongs to the NGF-beta family.</text>
</comment>
<organism>
    <name type="scientific">Lipotes vexillifer</name>
    <name type="common">Yangtze river dolphin</name>
    <dbReference type="NCBI Taxonomy" id="118797"/>
    <lineage>
        <taxon>Eukaryota</taxon>
        <taxon>Metazoa</taxon>
        <taxon>Chordata</taxon>
        <taxon>Craniata</taxon>
        <taxon>Vertebrata</taxon>
        <taxon>Euteleostomi</taxon>
        <taxon>Mammalia</taxon>
        <taxon>Eutheria</taxon>
        <taxon>Laurasiatheria</taxon>
        <taxon>Artiodactyla</taxon>
        <taxon>Whippomorpha</taxon>
        <taxon>Cetacea</taxon>
        <taxon>Odontoceti</taxon>
        <taxon>Lipotidae</taxon>
        <taxon>Lipotes</taxon>
    </lineage>
</organism>
<protein>
    <recommendedName>
        <fullName evidence="4">Neurotrophic factor BDNF precursor form</fullName>
        <shortName>proBDNF</shortName>
    </recommendedName>
    <alternativeName>
        <fullName>Brain-derived neurotrophic factor</fullName>
    </alternativeName>
    <component>
        <recommendedName>
            <fullName>Neurotrophic factor BDNF</fullName>
        </recommendedName>
    </component>
</protein>
<gene>
    <name type="primary">BDNF</name>
</gene>
<name>BDNF_LIPVE</name>